<name>RHMA_ECOLU</name>
<proteinExistence type="inferred from homology"/>
<organism>
    <name type="scientific">Escherichia coli O17:K52:H18 (strain UMN026 / ExPEC)</name>
    <dbReference type="NCBI Taxonomy" id="585056"/>
    <lineage>
        <taxon>Bacteria</taxon>
        <taxon>Pseudomonadati</taxon>
        <taxon>Pseudomonadota</taxon>
        <taxon>Gammaproteobacteria</taxon>
        <taxon>Enterobacterales</taxon>
        <taxon>Enterobacteriaceae</taxon>
        <taxon>Escherichia</taxon>
    </lineage>
</organism>
<sequence>MNALLTNPFKERLRKGEVQIGLWLSSTTSYMAEIAATSGYDWLLIDGEHAPNTIQDLYHQLQAVAPYASQPVIRPVEGSKSLIKQVLDIGAQTLLIPMVDTADQARQVVSATRYPPYGERGVGASVARAARWGRIENYMAQVNDSLCLLVQVESKTALDNLDEILDVEGIDGVFIGPADLSASLGYPDNAGHPEVQRIIETSIRRIRAAGKAAGFLAVAPDMAQQCLAWGANFVAVGVDTMLYSDALDQRLAMFKSGKNGPRIKGSY</sequence>
<dbReference type="EC" id="4.1.2.53" evidence="1"/>
<dbReference type="EMBL" id="CU928163">
    <property type="protein sequence ID" value="CAR13769.1"/>
    <property type="molecule type" value="Genomic_DNA"/>
</dbReference>
<dbReference type="RefSeq" id="YP_002413297.1">
    <property type="nucleotide sequence ID" value="NC_011751.1"/>
</dbReference>
<dbReference type="SMR" id="B7N5L0"/>
<dbReference type="STRING" id="585056.ECUMN_2586"/>
<dbReference type="KEGG" id="eum:ECUMN_2586"/>
<dbReference type="PATRIC" id="fig|585056.7.peg.2766"/>
<dbReference type="HOGENOM" id="CLU_059964_1_0_6"/>
<dbReference type="Proteomes" id="UP000007097">
    <property type="component" value="Chromosome"/>
</dbReference>
<dbReference type="GO" id="GO:0005737">
    <property type="term" value="C:cytoplasm"/>
    <property type="evidence" value="ECO:0007669"/>
    <property type="project" value="TreeGrafter"/>
</dbReference>
<dbReference type="GO" id="GO:0106099">
    <property type="term" value="F:2-keto-3-deoxy-L-rhamnonate aldolase activity"/>
    <property type="evidence" value="ECO:0007669"/>
    <property type="project" value="UniProtKB-EC"/>
</dbReference>
<dbReference type="GO" id="GO:0000287">
    <property type="term" value="F:magnesium ion binding"/>
    <property type="evidence" value="ECO:0007669"/>
    <property type="project" value="UniProtKB-UniRule"/>
</dbReference>
<dbReference type="FunFam" id="3.20.20.60:FF:000004">
    <property type="entry name" value="5-keto-4-deoxy-D-glucarate aldolase"/>
    <property type="match status" value="1"/>
</dbReference>
<dbReference type="Gene3D" id="3.20.20.60">
    <property type="entry name" value="Phosphoenolpyruvate-binding domains"/>
    <property type="match status" value="1"/>
</dbReference>
<dbReference type="HAMAP" id="MF_01290">
    <property type="entry name" value="KDR_aldolase"/>
    <property type="match status" value="1"/>
</dbReference>
<dbReference type="InterPro" id="IPR005000">
    <property type="entry name" value="Aldolase/citrate-lyase_domain"/>
</dbReference>
<dbReference type="InterPro" id="IPR050251">
    <property type="entry name" value="HpcH-HpaI_aldolase"/>
</dbReference>
<dbReference type="InterPro" id="IPR023593">
    <property type="entry name" value="KDR_aldolase"/>
</dbReference>
<dbReference type="InterPro" id="IPR015813">
    <property type="entry name" value="Pyrv/PenolPyrv_kinase-like_dom"/>
</dbReference>
<dbReference type="InterPro" id="IPR040442">
    <property type="entry name" value="Pyrv_kinase-like_dom_sf"/>
</dbReference>
<dbReference type="NCBIfam" id="NF007521">
    <property type="entry name" value="PRK10128.1"/>
    <property type="match status" value="1"/>
</dbReference>
<dbReference type="PANTHER" id="PTHR30502">
    <property type="entry name" value="2-KETO-3-DEOXY-L-RHAMNONATE ALDOLASE"/>
    <property type="match status" value="1"/>
</dbReference>
<dbReference type="PANTHER" id="PTHR30502:SF5">
    <property type="entry name" value="2-KETO-3-DEOXY-L-RHAMNONATE ALDOLASE"/>
    <property type="match status" value="1"/>
</dbReference>
<dbReference type="Pfam" id="PF03328">
    <property type="entry name" value="HpcH_HpaI"/>
    <property type="match status" value="1"/>
</dbReference>
<dbReference type="SUPFAM" id="SSF51621">
    <property type="entry name" value="Phosphoenolpyruvate/pyruvate domain"/>
    <property type="match status" value="1"/>
</dbReference>
<comment type="function">
    <text evidence="1">Catalyzes the reversible retro-aldol cleavage of 2-keto-3-deoxy-L-rhamnonate (KDR) to pyruvate and lactaldehyde.</text>
</comment>
<comment type="catalytic activity">
    <reaction evidence="1">
        <text>2-dehydro-3-deoxy-L-rhamnonate = (S)-lactaldehyde + pyruvate</text>
        <dbReference type="Rhea" id="RHEA:25784"/>
        <dbReference type="ChEBI" id="CHEBI:15361"/>
        <dbReference type="ChEBI" id="CHEBI:18041"/>
        <dbReference type="ChEBI" id="CHEBI:58371"/>
        <dbReference type="EC" id="4.1.2.53"/>
    </reaction>
</comment>
<comment type="cofactor">
    <cofactor evidence="1">
        <name>Mg(2+)</name>
        <dbReference type="ChEBI" id="CHEBI:18420"/>
    </cofactor>
    <text evidence="1">Binds 1 Mg(2+) ion per subunit.</text>
</comment>
<comment type="subunit">
    <text evidence="1">Homohexamer.</text>
</comment>
<comment type="similarity">
    <text evidence="1">Belongs to the HpcH/HpaI aldolase family. KDR aldolase subfamily.</text>
</comment>
<feature type="chain" id="PRO_1000140395" description="2-keto-3-deoxy-L-rhamnonate aldolase">
    <location>
        <begin position="1"/>
        <end position="267"/>
    </location>
</feature>
<feature type="active site" description="Proton acceptor" evidence="1">
    <location>
        <position position="49"/>
    </location>
</feature>
<feature type="binding site" evidence="1">
    <location>
        <position position="151"/>
    </location>
    <ligand>
        <name>substrate</name>
    </ligand>
</feature>
<feature type="binding site" evidence="1">
    <location>
        <position position="153"/>
    </location>
    <ligand>
        <name>Mg(2+)</name>
        <dbReference type="ChEBI" id="CHEBI:18420"/>
    </ligand>
</feature>
<feature type="binding site" evidence="1">
    <location>
        <position position="178"/>
    </location>
    <ligand>
        <name>substrate</name>
    </ligand>
</feature>
<feature type="binding site" evidence="1">
    <location>
        <position position="179"/>
    </location>
    <ligand>
        <name>Mg(2+)</name>
        <dbReference type="ChEBI" id="CHEBI:18420"/>
    </ligand>
</feature>
<feature type="binding site" evidence="1">
    <location>
        <position position="179"/>
    </location>
    <ligand>
        <name>substrate</name>
    </ligand>
</feature>
<feature type="site" description="Transition state stabilizer" evidence="1">
    <location>
        <position position="74"/>
    </location>
</feature>
<feature type="site" description="Increases basicity of active site His" evidence="1">
    <location>
        <position position="88"/>
    </location>
</feature>
<accession>B7N5L0</accession>
<protein>
    <recommendedName>
        <fullName evidence="1">2-keto-3-deoxy-L-rhamnonate aldolase</fullName>
        <shortName evidence="1">KDR aldolase</shortName>
        <ecNumber evidence="1">4.1.2.53</ecNumber>
    </recommendedName>
    <alternativeName>
        <fullName evidence="1">2-dehydro-3-deoxyrhamnonate aldolase</fullName>
    </alternativeName>
</protein>
<gene>
    <name evidence="1" type="primary">rhmA</name>
    <name type="ordered locus">ECUMN_2586</name>
</gene>
<evidence type="ECO:0000255" key="1">
    <source>
        <dbReference type="HAMAP-Rule" id="MF_01290"/>
    </source>
</evidence>
<reference key="1">
    <citation type="journal article" date="2009" name="PLoS Genet.">
        <title>Organised genome dynamics in the Escherichia coli species results in highly diverse adaptive paths.</title>
        <authorList>
            <person name="Touchon M."/>
            <person name="Hoede C."/>
            <person name="Tenaillon O."/>
            <person name="Barbe V."/>
            <person name="Baeriswyl S."/>
            <person name="Bidet P."/>
            <person name="Bingen E."/>
            <person name="Bonacorsi S."/>
            <person name="Bouchier C."/>
            <person name="Bouvet O."/>
            <person name="Calteau A."/>
            <person name="Chiapello H."/>
            <person name="Clermont O."/>
            <person name="Cruveiller S."/>
            <person name="Danchin A."/>
            <person name="Diard M."/>
            <person name="Dossat C."/>
            <person name="Karoui M.E."/>
            <person name="Frapy E."/>
            <person name="Garry L."/>
            <person name="Ghigo J.M."/>
            <person name="Gilles A.M."/>
            <person name="Johnson J."/>
            <person name="Le Bouguenec C."/>
            <person name="Lescat M."/>
            <person name="Mangenot S."/>
            <person name="Martinez-Jehanne V."/>
            <person name="Matic I."/>
            <person name="Nassif X."/>
            <person name="Oztas S."/>
            <person name="Petit M.A."/>
            <person name="Pichon C."/>
            <person name="Rouy Z."/>
            <person name="Ruf C.S."/>
            <person name="Schneider D."/>
            <person name="Tourret J."/>
            <person name="Vacherie B."/>
            <person name="Vallenet D."/>
            <person name="Medigue C."/>
            <person name="Rocha E.P.C."/>
            <person name="Denamur E."/>
        </authorList>
    </citation>
    <scope>NUCLEOTIDE SEQUENCE [LARGE SCALE GENOMIC DNA]</scope>
    <source>
        <strain>UMN026 / ExPEC</strain>
    </source>
</reference>
<keyword id="KW-0456">Lyase</keyword>
<keyword id="KW-0460">Magnesium</keyword>
<keyword id="KW-0479">Metal-binding</keyword>